<proteinExistence type="inferred from homology"/>
<comment type="function">
    <text evidence="1">Negative regulator of class I heat shock genes (grpE-dnaK-dnaJ and groELS operons). Prevents heat-shock induction of these operons.</text>
</comment>
<comment type="similarity">
    <text evidence="1">Belongs to the HrcA family.</text>
</comment>
<name>HRCA_BACC3</name>
<organism>
    <name type="scientific">Bacillus cereus (strain 03BB102)</name>
    <dbReference type="NCBI Taxonomy" id="572264"/>
    <lineage>
        <taxon>Bacteria</taxon>
        <taxon>Bacillati</taxon>
        <taxon>Bacillota</taxon>
        <taxon>Bacilli</taxon>
        <taxon>Bacillales</taxon>
        <taxon>Bacillaceae</taxon>
        <taxon>Bacillus</taxon>
        <taxon>Bacillus cereus group</taxon>
    </lineage>
</organism>
<protein>
    <recommendedName>
        <fullName evidence="1">Heat-inducible transcription repressor HrcA</fullName>
    </recommendedName>
</protein>
<feature type="chain" id="PRO_1000118288" description="Heat-inducible transcription repressor HrcA">
    <location>
        <begin position="1"/>
        <end position="338"/>
    </location>
</feature>
<accession>C1ESL0</accession>
<evidence type="ECO:0000255" key="1">
    <source>
        <dbReference type="HAMAP-Rule" id="MF_00081"/>
    </source>
</evidence>
<sequence>MLTERQLLILQTIIDDFIGSAQPVGSRTLAKKDAITFSSATIRNEMADLEELGFIEKTHSSSGRVPSEKGYRFYVDHLLAPQNLPKDEIVQIKDLFAERIFEAEKIAQQSAQILSELTNYTAIVLGPKLSTNKLKNVQIVPLDRQTAVAIIVTDTGHVQSKTITVPESVDLSDLEKMVNILNEKLSGVPMSELHNKIFKEIVTVLRGYVHNYDSAIKMLDGTFQVPLSEKIYFGGKANMLSQPEFHDIHKVRSLLTMIDNEAEFYDILRHKQVGIQVKIGRENSATAMEDCSLISATYSIGEEQLGTIAILGPTRMQYSRVISLLQLFTRQFTDGLKK</sequence>
<reference key="1">
    <citation type="submission" date="2009-02" db="EMBL/GenBank/DDBJ databases">
        <title>Genome sequence of Bacillus cereus 03BB102.</title>
        <authorList>
            <person name="Dodson R.J."/>
            <person name="Jackson P."/>
            <person name="Munk A.C."/>
            <person name="Brettin T."/>
            <person name="Bruce D."/>
            <person name="Detter C."/>
            <person name="Tapia R."/>
            <person name="Han C."/>
            <person name="Sutton G."/>
            <person name="Sims D."/>
        </authorList>
    </citation>
    <scope>NUCLEOTIDE SEQUENCE [LARGE SCALE GENOMIC DNA]</scope>
    <source>
        <strain>03BB102</strain>
    </source>
</reference>
<gene>
    <name evidence="1" type="primary">hrcA</name>
    <name type="ordered locus">BCA_4427</name>
</gene>
<dbReference type="EMBL" id="CP001407">
    <property type="protein sequence ID" value="ACO28425.1"/>
    <property type="molecule type" value="Genomic_DNA"/>
</dbReference>
<dbReference type="RefSeq" id="WP_000954939.1">
    <property type="nucleotide sequence ID" value="NZ_CP009318.1"/>
</dbReference>
<dbReference type="SMR" id="C1ESL0"/>
<dbReference type="KEGG" id="bcx:BCA_4427"/>
<dbReference type="PATRIC" id="fig|572264.18.peg.4375"/>
<dbReference type="Proteomes" id="UP000002210">
    <property type="component" value="Chromosome"/>
</dbReference>
<dbReference type="GO" id="GO:0003677">
    <property type="term" value="F:DNA binding"/>
    <property type="evidence" value="ECO:0007669"/>
    <property type="project" value="InterPro"/>
</dbReference>
<dbReference type="GO" id="GO:0045892">
    <property type="term" value="P:negative regulation of DNA-templated transcription"/>
    <property type="evidence" value="ECO:0007669"/>
    <property type="project" value="UniProtKB-UniRule"/>
</dbReference>
<dbReference type="FunFam" id="1.10.10.10:FF:000049">
    <property type="entry name" value="Heat-inducible transcription repressor HrcA"/>
    <property type="match status" value="1"/>
</dbReference>
<dbReference type="FunFam" id="3.30.390.60:FF:000001">
    <property type="entry name" value="Heat-inducible transcription repressor HrcA"/>
    <property type="match status" value="1"/>
</dbReference>
<dbReference type="Gene3D" id="3.30.450.40">
    <property type="match status" value="1"/>
</dbReference>
<dbReference type="Gene3D" id="3.30.390.60">
    <property type="entry name" value="Heat-inducible transcription repressor hrca homolog, domain 3"/>
    <property type="match status" value="1"/>
</dbReference>
<dbReference type="Gene3D" id="1.10.10.10">
    <property type="entry name" value="Winged helix-like DNA-binding domain superfamily/Winged helix DNA-binding domain"/>
    <property type="match status" value="1"/>
</dbReference>
<dbReference type="HAMAP" id="MF_00081">
    <property type="entry name" value="HrcA"/>
    <property type="match status" value="1"/>
</dbReference>
<dbReference type="InterPro" id="IPR029016">
    <property type="entry name" value="GAF-like_dom_sf"/>
</dbReference>
<dbReference type="InterPro" id="IPR002571">
    <property type="entry name" value="HrcA"/>
</dbReference>
<dbReference type="InterPro" id="IPR021153">
    <property type="entry name" value="HrcA_C"/>
</dbReference>
<dbReference type="InterPro" id="IPR036388">
    <property type="entry name" value="WH-like_DNA-bd_sf"/>
</dbReference>
<dbReference type="InterPro" id="IPR036390">
    <property type="entry name" value="WH_DNA-bd_sf"/>
</dbReference>
<dbReference type="InterPro" id="IPR023120">
    <property type="entry name" value="WHTH_transcript_rep_HrcA_IDD"/>
</dbReference>
<dbReference type="NCBIfam" id="TIGR00331">
    <property type="entry name" value="hrcA"/>
    <property type="match status" value="1"/>
</dbReference>
<dbReference type="PANTHER" id="PTHR34824">
    <property type="entry name" value="HEAT-INDUCIBLE TRANSCRIPTION REPRESSOR HRCA"/>
    <property type="match status" value="1"/>
</dbReference>
<dbReference type="PANTHER" id="PTHR34824:SF1">
    <property type="entry name" value="HEAT-INDUCIBLE TRANSCRIPTION REPRESSOR HRCA"/>
    <property type="match status" value="1"/>
</dbReference>
<dbReference type="Pfam" id="PF01628">
    <property type="entry name" value="HrcA"/>
    <property type="match status" value="1"/>
</dbReference>
<dbReference type="PIRSF" id="PIRSF005485">
    <property type="entry name" value="HrcA"/>
    <property type="match status" value="1"/>
</dbReference>
<dbReference type="SUPFAM" id="SSF55781">
    <property type="entry name" value="GAF domain-like"/>
    <property type="match status" value="1"/>
</dbReference>
<dbReference type="SUPFAM" id="SSF46785">
    <property type="entry name" value="Winged helix' DNA-binding domain"/>
    <property type="match status" value="1"/>
</dbReference>
<keyword id="KW-0678">Repressor</keyword>
<keyword id="KW-0346">Stress response</keyword>
<keyword id="KW-0804">Transcription</keyword>
<keyword id="KW-0805">Transcription regulation</keyword>